<reference key="1">
    <citation type="journal article" date="2007" name="PLoS ONE">
        <title>Paradoxical DNA repair and peroxide resistance gene conservation in Bacillus pumilus SAFR-032.</title>
        <authorList>
            <person name="Gioia J."/>
            <person name="Yerrapragada S."/>
            <person name="Qin X."/>
            <person name="Jiang H."/>
            <person name="Igboeli O.C."/>
            <person name="Muzny D."/>
            <person name="Dugan-Rocha S."/>
            <person name="Ding Y."/>
            <person name="Hawes A."/>
            <person name="Liu W."/>
            <person name="Perez L."/>
            <person name="Kovar C."/>
            <person name="Dinh H."/>
            <person name="Lee S."/>
            <person name="Nazareth L."/>
            <person name="Blyth P."/>
            <person name="Holder M."/>
            <person name="Buhay C."/>
            <person name="Tirumalai M.R."/>
            <person name="Liu Y."/>
            <person name="Dasgupta I."/>
            <person name="Bokhetache L."/>
            <person name="Fujita M."/>
            <person name="Karouia F."/>
            <person name="Eswara Moorthy P."/>
            <person name="Siefert J."/>
            <person name="Uzman A."/>
            <person name="Buzumbo P."/>
            <person name="Verma A."/>
            <person name="Zwiya H."/>
            <person name="McWilliams B.D."/>
            <person name="Olowu A."/>
            <person name="Clinkenbeard K.D."/>
            <person name="Newcombe D."/>
            <person name="Golebiewski L."/>
            <person name="Petrosino J.F."/>
            <person name="Nicholson W.L."/>
            <person name="Fox G.E."/>
            <person name="Venkateswaran K."/>
            <person name="Highlander S.K."/>
            <person name="Weinstock G.M."/>
        </authorList>
    </citation>
    <scope>NUCLEOTIDE SEQUENCE [LARGE SCALE GENOMIC DNA]</scope>
    <source>
        <strain>SAFR-032</strain>
    </source>
</reference>
<keyword id="KW-0963">Cytoplasm</keyword>
<keyword id="KW-0350">Heme biosynthesis</keyword>
<keyword id="KW-0408">Iron</keyword>
<keyword id="KW-0456">Lyase</keyword>
<keyword id="KW-0479">Metal-binding</keyword>
<keyword id="KW-0627">Porphyrin biosynthesis</keyword>
<comment type="function">
    <text evidence="1">Involved in coproporphyrin-dependent heme b biosynthesis. Catalyzes the insertion of ferrous iron into coproporphyrin III to form Fe-coproporphyrin III.</text>
</comment>
<comment type="catalytic activity">
    <reaction evidence="1">
        <text>Fe-coproporphyrin III + 2 H(+) = coproporphyrin III + Fe(2+)</text>
        <dbReference type="Rhea" id="RHEA:49572"/>
        <dbReference type="ChEBI" id="CHEBI:15378"/>
        <dbReference type="ChEBI" id="CHEBI:29033"/>
        <dbReference type="ChEBI" id="CHEBI:68438"/>
        <dbReference type="ChEBI" id="CHEBI:131725"/>
        <dbReference type="EC" id="4.99.1.9"/>
    </reaction>
    <physiologicalReaction direction="right-to-left" evidence="1">
        <dbReference type="Rhea" id="RHEA:49574"/>
    </physiologicalReaction>
</comment>
<comment type="pathway">
    <text evidence="1">Porphyrin-containing compound metabolism; protoheme biosynthesis.</text>
</comment>
<comment type="subcellular location">
    <subcellularLocation>
        <location evidence="1">Cytoplasm</location>
    </subcellularLocation>
</comment>
<comment type="similarity">
    <text evidence="1">Belongs to the ferrochelatase family.</text>
</comment>
<dbReference type="EC" id="4.99.1.9" evidence="1"/>
<dbReference type="EMBL" id="CP000813">
    <property type="protein sequence ID" value="ABV61643.1"/>
    <property type="molecule type" value="Genomic_DNA"/>
</dbReference>
<dbReference type="SMR" id="A8FBM6"/>
<dbReference type="STRING" id="315750.BPUM_0959"/>
<dbReference type="GeneID" id="5620223"/>
<dbReference type="KEGG" id="bpu:BPUM_0959"/>
<dbReference type="eggNOG" id="COG0276">
    <property type="taxonomic scope" value="Bacteria"/>
</dbReference>
<dbReference type="HOGENOM" id="CLU_018884_2_1_9"/>
<dbReference type="OrthoDB" id="9776380at2"/>
<dbReference type="UniPathway" id="UPA00252"/>
<dbReference type="Proteomes" id="UP000001355">
    <property type="component" value="Chromosome"/>
</dbReference>
<dbReference type="GO" id="GO:0005737">
    <property type="term" value="C:cytoplasm"/>
    <property type="evidence" value="ECO:0007669"/>
    <property type="project" value="UniProtKB-SubCell"/>
</dbReference>
<dbReference type="GO" id="GO:0004325">
    <property type="term" value="F:ferrochelatase activity"/>
    <property type="evidence" value="ECO:0007669"/>
    <property type="project" value="UniProtKB-UniRule"/>
</dbReference>
<dbReference type="GO" id="GO:0046872">
    <property type="term" value="F:metal ion binding"/>
    <property type="evidence" value="ECO:0007669"/>
    <property type="project" value="UniProtKB-KW"/>
</dbReference>
<dbReference type="GO" id="GO:0006783">
    <property type="term" value="P:heme biosynthetic process"/>
    <property type="evidence" value="ECO:0007669"/>
    <property type="project" value="UniProtKB-UniRule"/>
</dbReference>
<dbReference type="CDD" id="cd00419">
    <property type="entry name" value="Ferrochelatase_C"/>
    <property type="match status" value="1"/>
</dbReference>
<dbReference type="CDD" id="cd03411">
    <property type="entry name" value="Ferrochelatase_N"/>
    <property type="match status" value="1"/>
</dbReference>
<dbReference type="FunFam" id="3.40.50.1400:FF:000009">
    <property type="entry name" value="Ferrochelatase"/>
    <property type="match status" value="1"/>
</dbReference>
<dbReference type="Gene3D" id="3.40.50.1400">
    <property type="match status" value="2"/>
</dbReference>
<dbReference type="HAMAP" id="MF_00323">
    <property type="entry name" value="Ferrochelatase"/>
    <property type="match status" value="1"/>
</dbReference>
<dbReference type="InterPro" id="IPR001015">
    <property type="entry name" value="Ferrochelatase"/>
</dbReference>
<dbReference type="InterPro" id="IPR019772">
    <property type="entry name" value="Ferrochelatase_AS"/>
</dbReference>
<dbReference type="InterPro" id="IPR033644">
    <property type="entry name" value="Ferrochelatase_C"/>
</dbReference>
<dbReference type="InterPro" id="IPR033659">
    <property type="entry name" value="Ferrochelatase_N"/>
</dbReference>
<dbReference type="NCBIfam" id="TIGR00109">
    <property type="entry name" value="hemH"/>
    <property type="match status" value="1"/>
</dbReference>
<dbReference type="NCBIfam" id="NF009095">
    <property type="entry name" value="PRK12435.1"/>
    <property type="match status" value="1"/>
</dbReference>
<dbReference type="PANTHER" id="PTHR11108">
    <property type="entry name" value="FERROCHELATASE"/>
    <property type="match status" value="1"/>
</dbReference>
<dbReference type="PANTHER" id="PTHR11108:SF1">
    <property type="entry name" value="FERROCHELATASE, MITOCHONDRIAL"/>
    <property type="match status" value="1"/>
</dbReference>
<dbReference type="Pfam" id="PF00762">
    <property type="entry name" value="Ferrochelatase"/>
    <property type="match status" value="1"/>
</dbReference>
<dbReference type="SUPFAM" id="SSF53800">
    <property type="entry name" value="Chelatase"/>
    <property type="match status" value="1"/>
</dbReference>
<dbReference type="PROSITE" id="PS00534">
    <property type="entry name" value="FERROCHELATASE"/>
    <property type="match status" value="1"/>
</dbReference>
<proteinExistence type="inferred from homology"/>
<sequence>MEKKKMGLLVMAYGTPYKEEDIERYYTHIRRGRKPEPEMLQDLKDRYKAIGGISPLSKITEQQAHGLCEHLNDIQDDIEFHVYIGLKHIEPFIEDAVADMHKDGITEAVSIVLAPHFSTFSVKSYNKRAQDEADKLGNLQITSVESWYDEPKFVDYWVKQVKDTYASMSQEERDSAVLIVSAHSLPEKIIAAGDPYPDQLAQSAKMIAEGAGIEHYEIGWQSEGNTPDPWLGPDVQDLTRDLFEQKGYQTFVYVPVGFVADHLEVLYDNDYECKVVTDEIGAAYYRPEMPNAKPAFIDALATVVLKKLDESK</sequence>
<evidence type="ECO:0000255" key="1">
    <source>
        <dbReference type="HAMAP-Rule" id="MF_00323"/>
    </source>
</evidence>
<feature type="chain" id="PRO_1000072022" description="Coproporphyrin III ferrochelatase">
    <location>
        <begin position="1"/>
        <end position="312"/>
    </location>
</feature>
<feature type="binding site" description="axial binding residue" evidence="1">
    <location>
        <position position="13"/>
    </location>
    <ligand>
        <name>Fe-coproporphyrin III</name>
        <dbReference type="ChEBI" id="CHEBI:68438"/>
    </ligand>
    <ligandPart>
        <name>Fe</name>
        <dbReference type="ChEBI" id="CHEBI:18248"/>
    </ligandPart>
</feature>
<feature type="binding site" evidence="1">
    <location>
        <position position="30"/>
    </location>
    <ligand>
        <name>Fe-coproporphyrin III</name>
        <dbReference type="ChEBI" id="CHEBI:68438"/>
    </ligand>
</feature>
<feature type="binding site" evidence="1">
    <location>
        <begin position="46"/>
        <end position="47"/>
    </location>
    <ligand>
        <name>Fe-coproporphyrin III</name>
        <dbReference type="ChEBI" id="CHEBI:68438"/>
    </ligand>
</feature>
<feature type="binding site" evidence="1">
    <location>
        <position position="54"/>
    </location>
    <ligand>
        <name>Fe-coproporphyrin III</name>
        <dbReference type="ChEBI" id="CHEBI:68438"/>
    </ligand>
</feature>
<feature type="binding site" evidence="1">
    <location>
        <position position="125"/>
    </location>
    <ligand>
        <name>Fe-coproporphyrin III</name>
        <dbReference type="ChEBI" id="CHEBI:68438"/>
    </ligand>
</feature>
<feature type="binding site" evidence="1">
    <location>
        <position position="183"/>
    </location>
    <ligand>
        <name>Fe(2+)</name>
        <dbReference type="ChEBI" id="CHEBI:29033"/>
    </ligand>
</feature>
<feature type="binding site" evidence="1">
    <location>
        <position position="264"/>
    </location>
    <ligand>
        <name>Fe(2+)</name>
        <dbReference type="ChEBI" id="CHEBI:29033"/>
    </ligand>
</feature>
<protein>
    <recommendedName>
        <fullName evidence="1">Coproporphyrin III ferrochelatase</fullName>
        <ecNumber evidence="1">4.99.1.9</ecNumber>
    </recommendedName>
</protein>
<organism>
    <name type="scientific">Bacillus pumilus (strain SAFR-032)</name>
    <dbReference type="NCBI Taxonomy" id="315750"/>
    <lineage>
        <taxon>Bacteria</taxon>
        <taxon>Bacillati</taxon>
        <taxon>Bacillota</taxon>
        <taxon>Bacilli</taxon>
        <taxon>Bacillales</taxon>
        <taxon>Bacillaceae</taxon>
        <taxon>Bacillus</taxon>
    </lineage>
</organism>
<name>CPFC_BACP2</name>
<gene>
    <name evidence="1" type="primary">cpfC</name>
    <name type="ordered locus">BPUM_0959</name>
</gene>
<accession>A8FBM6</accession>